<comment type="function">
    <text evidence="1">Negatively regulates transcription of bacterial ribonucleotide reductase nrd genes and operons by binding to NrdR-boxes.</text>
</comment>
<comment type="cofactor">
    <cofactor evidence="1">
        <name>Zn(2+)</name>
        <dbReference type="ChEBI" id="CHEBI:29105"/>
    </cofactor>
    <text evidence="1">Binds 1 zinc ion.</text>
</comment>
<comment type="similarity">
    <text evidence="1">Belongs to the NrdR family.</text>
</comment>
<sequence>MRCPYCGSEDTQVKDSRPAEDNTSIRRRRICPDCGGRFTTFERVQLRELMVIKKTGRKVLFDRDKLVRSFEIALRKRPVDRDRIERAVSGIVRRLESSGETEISSEQIGLQVLEALKSLDDVAFVRYASVYRDFSHAEDFENVITEINAKIARDPLDP</sequence>
<dbReference type="EMBL" id="CP000628">
    <property type="protein sequence ID" value="ACM26112.1"/>
    <property type="molecule type" value="Genomic_DNA"/>
</dbReference>
<dbReference type="RefSeq" id="WP_007692797.1">
    <property type="nucleotide sequence ID" value="NC_011985.1"/>
</dbReference>
<dbReference type="SMR" id="B9JCX5"/>
<dbReference type="STRING" id="311403.Arad_1753"/>
<dbReference type="GeneID" id="86847991"/>
<dbReference type="KEGG" id="ara:Arad_1753"/>
<dbReference type="eggNOG" id="COG1327">
    <property type="taxonomic scope" value="Bacteria"/>
</dbReference>
<dbReference type="HOGENOM" id="CLU_108412_0_1_5"/>
<dbReference type="Proteomes" id="UP000001600">
    <property type="component" value="Chromosome 1"/>
</dbReference>
<dbReference type="GO" id="GO:0005524">
    <property type="term" value="F:ATP binding"/>
    <property type="evidence" value="ECO:0007669"/>
    <property type="project" value="UniProtKB-KW"/>
</dbReference>
<dbReference type="GO" id="GO:0003677">
    <property type="term" value="F:DNA binding"/>
    <property type="evidence" value="ECO:0007669"/>
    <property type="project" value="UniProtKB-KW"/>
</dbReference>
<dbReference type="GO" id="GO:0008270">
    <property type="term" value="F:zinc ion binding"/>
    <property type="evidence" value="ECO:0007669"/>
    <property type="project" value="UniProtKB-UniRule"/>
</dbReference>
<dbReference type="GO" id="GO:0045892">
    <property type="term" value="P:negative regulation of DNA-templated transcription"/>
    <property type="evidence" value="ECO:0007669"/>
    <property type="project" value="UniProtKB-UniRule"/>
</dbReference>
<dbReference type="HAMAP" id="MF_00440">
    <property type="entry name" value="NrdR"/>
    <property type="match status" value="1"/>
</dbReference>
<dbReference type="InterPro" id="IPR005144">
    <property type="entry name" value="ATP-cone_dom"/>
</dbReference>
<dbReference type="InterPro" id="IPR055173">
    <property type="entry name" value="NrdR-like_N"/>
</dbReference>
<dbReference type="InterPro" id="IPR003796">
    <property type="entry name" value="RNR_NrdR-like"/>
</dbReference>
<dbReference type="NCBIfam" id="TIGR00244">
    <property type="entry name" value="transcriptional regulator NrdR"/>
    <property type="match status" value="1"/>
</dbReference>
<dbReference type="PANTHER" id="PTHR30455">
    <property type="entry name" value="TRANSCRIPTIONAL REPRESSOR NRDR"/>
    <property type="match status" value="1"/>
</dbReference>
<dbReference type="PANTHER" id="PTHR30455:SF2">
    <property type="entry name" value="TRANSCRIPTIONAL REPRESSOR NRDR"/>
    <property type="match status" value="1"/>
</dbReference>
<dbReference type="Pfam" id="PF03477">
    <property type="entry name" value="ATP-cone"/>
    <property type="match status" value="1"/>
</dbReference>
<dbReference type="Pfam" id="PF22811">
    <property type="entry name" value="Zn_ribbon_NrdR"/>
    <property type="match status" value="1"/>
</dbReference>
<dbReference type="PROSITE" id="PS51161">
    <property type="entry name" value="ATP_CONE"/>
    <property type="match status" value="1"/>
</dbReference>
<protein>
    <recommendedName>
        <fullName evidence="1">Transcriptional repressor NrdR</fullName>
    </recommendedName>
</protein>
<name>NRDR_RHIR8</name>
<keyword id="KW-0067">ATP-binding</keyword>
<keyword id="KW-0238">DNA-binding</keyword>
<keyword id="KW-0479">Metal-binding</keyword>
<keyword id="KW-0547">Nucleotide-binding</keyword>
<keyword id="KW-0678">Repressor</keyword>
<keyword id="KW-0804">Transcription</keyword>
<keyword id="KW-0805">Transcription regulation</keyword>
<keyword id="KW-0862">Zinc</keyword>
<keyword id="KW-0863">Zinc-finger</keyword>
<gene>
    <name evidence="1" type="primary">nrdR</name>
    <name type="ordered locus">Arad_1753</name>
</gene>
<evidence type="ECO:0000255" key="1">
    <source>
        <dbReference type="HAMAP-Rule" id="MF_00440"/>
    </source>
</evidence>
<evidence type="ECO:0000256" key="2">
    <source>
        <dbReference type="SAM" id="MobiDB-lite"/>
    </source>
</evidence>
<reference key="1">
    <citation type="journal article" date="2009" name="J. Bacteriol.">
        <title>Genome sequences of three Agrobacterium biovars help elucidate the evolution of multichromosome genomes in bacteria.</title>
        <authorList>
            <person name="Slater S.C."/>
            <person name="Goldman B.S."/>
            <person name="Goodner B."/>
            <person name="Setubal J.C."/>
            <person name="Farrand S.K."/>
            <person name="Nester E.W."/>
            <person name="Burr T.J."/>
            <person name="Banta L."/>
            <person name="Dickerman A.W."/>
            <person name="Paulsen I."/>
            <person name="Otten L."/>
            <person name="Suen G."/>
            <person name="Welch R."/>
            <person name="Almeida N.F."/>
            <person name="Arnold F."/>
            <person name="Burton O.T."/>
            <person name="Du Z."/>
            <person name="Ewing A."/>
            <person name="Godsy E."/>
            <person name="Heisel S."/>
            <person name="Houmiel K.L."/>
            <person name="Jhaveri J."/>
            <person name="Lu J."/>
            <person name="Miller N.M."/>
            <person name="Norton S."/>
            <person name="Chen Q."/>
            <person name="Phoolcharoen W."/>
            <person name="Ohlin V."/>
            <person name="Ondrusek D."/>
            <person name="Pride N."/>
            <person name="Stricklin S.L."/>
            <person name="Sun J."/>
            <person name="Wheeler C."/>
            <person name="Wilson L."/>
            <person name="Zhu H."/>
            <person name="Wood D.W."/>
        </authorList>
    </citation>
    <scope>NUCLEOTIDE SEQUENCE [LARGE SCALE GENOMIC DNA]</scope>
    <source>
        <strain>K84 / ATCC BAA-868</strain>
    </source>
</reference>
<proteinExistence type="inferred from homology"/>
<feature type="chain" id="PRO_1000191772" description="Transcriptional repressor NrdR">
    <location>
        <begin position="1"/>
        <end position="158"/>
    </location>
</feature>
<feature type="domain" description="ATP-cone" evidence="1">
    <location>
        <begin position="49"/>
        <end position="139"/>
    </location>
</feature>
<feature type="zinc finger region" evidence="1">
    <location>
        <begin position="3"/>
        <end position="34"/>
    </location>
</feature>
<feature type="region of interest" description="Disordered" evidence="2">
    <location>
        <begin position="1"/>
        <end position="22"/>
    </location>
</feature>
<feature type="compositionally biased region" description="Basic and acidic residues" evidence="2">
    <location>
        <begin position="11"/>
        <end position="22"/>
    </location>
</feature>
<organism>
    <name type="scientific">Rhizobium rhizogenes (strain K84 / ATCC BAA-868)</name>
    <name type="common">Agrobacterium radiobacter</name>
    <dbReference type="NCBI Taxonomy" id="311403"/>
    <lineage>
        <taxon>Bacteria</taxon>
        <taxon>Pseudomonadati</taxon>
        <taxon>Pseudomonadota</taxon>
        <taxon>Alphaproteobacteria</taxon>
        <taxon>Hyphomicrobiales</taxon>
        <taxon>Rhizobiaceae</taxon>
        <taxon>Rhizobium/Agrobacterium group</taxon>
        <taxon>Rhizobium</taxon>
    </lineage>
</organism>
<accession>B9JCX5</accession>